<dbReference type="EMBL" id="AK008049">
    <property type="protein sequence ID" value="BAB25429.1"/>
    <property type="molecule type" value="mRNA"/>
</dbReference>
<dbReference type="EMBL" id="AK008438">
    <property type="protein sequence ID" value="BAB25669.1"/>
    <property type="molecule type" value="mRNA"/>
</dbReference>
<dbReference type="EMBL" id="AK162316">
    <property type="protein sequence ID" value="BAE36851.1"/>
    <property type="molecule type" value="mRNA"/>
</dbReference>
<dbReference type="EMBL" id="BC019465">
    <property type="protein sequence ID" value="AAH19465.1"/>
    <property type="molecule type" value="mRNA"/>
</dbReference>
<dbReference type="CCDS" id="CCDS17661.1"/>
<dbReference type="RefSeq" id="NP_080604.2">
    <property type="nucleotide sequence ID" value="NM_026328.2"/>
</dbReference>
<dbReference type="SMR" id="Q9D8G5"/>
<dbReference type="FunCoup" id="Q9D8G5">
    <property type="interactions" value="100"/>
</dbReference>
<dbReference type="STRING" id="10090.ENSMUSP00000029469"/>
<dbReference type="GlyCosmos" id="Q9D8G5">
    <property type="glycosylation" value="2 sites, No reported glycans"/>
</dbReference>
<dbReference type="GlyGen" id="Q9D8G5">
    <property type="glycosylation" value="2 sites"/>
</dbReference>
<dbReference type="iPTMnet" id="Q9D8G5"/>
<dbReference type="PhosphoSitePlus" id="Q9D8G5"/>
<dbReference type="PaxDb" id="10090-ENSMUSP00000029469"/>
<dbReference type="PeptideAtlas" id="Q9D8G5"/>
<dbReference type="ProteomicsDB" id="253202"/>
<dbReference type="Antibodypedia" id="46951">
    <property type="antibodies" value="223 antibodies from 27 providers"/>
</dbReference>
<dbReference type="Ensembl" id="ENSMUST00000029469.5">
    <property type="protein sequence ID" value="ENSMUSP00000029469.5"/>
    <property type="gene ID" value="ENSMUSG00000027876.5"/>
</dbReference>
<dbReference type="GeneID" id="67709"/>
<dbReference type="KEGG" id="mmu:67709"/>
<dbReference type="UCSC" id="uc008qpq.1">
    <property type="organism name" value="mouse"/>
</dbReference>
<dbReference type="AGR" id="MGI:1914959"/>
<dbReference type="CTD" id="83998"/>
<dbReference type="MGI" id="MGI:1914959">
    <property type="gene designation" value="Reg4"/>
</dbReference>
<dbReference type="VEuPathDB" id="HostDB:ENSMUSG00000027876"/>
<dbReference type="eggNOG" id="KOG4297">
    <property type="taxonomic scope" value="Eukaryota"/>
</dbReference>
<dbReference type="GeneTree" id="ENSGT00940000161011"/>
<dbReference type="HOGENOM" id="CLU_049894_10_1_1"/>
<dbReference type="InParanoid" id="Q9D8G5"/>
<dbReference type="OMA" id="RSHCYGY"/>
<dbReference type="OrthoDB" id="441660at2759"/>
<dbReference type="PhylomeDB" id="Q9D8G5"/>
<dbReference type="BioGRID-ORCS" id="67709">
    <property type="hits" value="2 hits in 76 CRISPR screens"/>
</dbReference>
<dbReference type="ChiTaRS" id="Reg4">
    <property type="organism name" value="mouse"/>
</dbReference>
<dbReference type="PRO" id="PR:Q9D8G5"/>
<dbReference type="Proteomes" id="UP000000589">
    <property type="component" value="Chromosome 3"/>
</dbReference>
<dbReference type="RNAct" id="Q9D8G5">
    <property type="molecule type" value="protein"/>
</dbReference>
<dbReference type="Bgee" id="ENSMUSG00000027876">
    <property type="expression patterns" value="Expressed in crypt of Lieberkuhn of small intestine and 43 other cell types or tissues"/>
</dbReference>
<dbReference type="GO" id="GO:0005737">
    <property type="term" value="C:cytoplasm"/>
    <property type="evidence" value="ECO:0000266"/>
    <property type="project" value="MGI"/>
</dbReference>
<dbReference type="GO" id="GO:0005615">
    <property type="term" value="C:extracellular space"/>
    <property type="evidence" value="ECO:0000266"/>
    <property type="project" value="MGI"/>
</dbReference>
<dbReference type="GO" id="GO:0008201">
    <property type="term" value="F:heparin binding"/>
    <property type="evidence" value="ECO:0007669"/>
    <property type="project" value="Ensembl"/>
</dbReference>
<dbReference type="GO" id="GO:2001065">
    <property type="term" value="F:mannan binding"/>
    <property type="evidence" value="ECO:0007669"/>
    <property type="project" value="Ensembl"/>
</dbReference>
<dbReference type="GO" id="GO:0009617">
    <property type="term" value="P:response to bacterium"/>
    <property type="evidence" value="ECO:0000270"/>
    <property type="project" value="MGI"/>
</dbReference>
<dbReference type="CDD" id="cd03594">
    <property type="entry name" value="CLECT_REG-1_like"/>
    <property type="match status" value="1"/>
</dbReference>
<dbReference type="FunFam" id="3.10.100.10:FF:000015">
    <property type="entry name" value="C-type lectin Cal"/>
    <property type="match status" value="1"/>
</dbReference>
<dbReference type="Gene3D" id="3.10.100.10">
    <property type="entry name" value="Mannose-Binding Protein A, subunit A"/>
    <property type="match status" value="1"/>
</dbReference>
<dbReference type="InterPro" id="IPR001304">
    <property type="entry name" value="C-type_lectin-like"/>
</dbReference>
<dbReference type="InterPro" id="IPR016186">
    <property type="entry name" value="C-type_lectin-like/link_sf"/>
</dbReference>
<dbReference type="InterPro" id="IPR050111">
    <property type="entry name" value="C-type_lectin/snaclec_domain"/>
</dbReference>
<dbReference type="InterPro" id="IPR016187">
    <property type="entry name" value="CTDL_fold"/>
</dbReference>
<dbReference type="PANTHER" id="PTHR22803">
    <property type="entry name" value="MANNOSE, PHOSPHOLIPASE, LECTIN RECEPTOR RELATED"/>
    <property type="match status" value="1"/>
</dbReference>
<dbReference type="Pfam" id="PF00059">
    <property type="entry name" value="Lectin_C"/>
    <property type="match status" value="1"/>
</dbReference>
<dbReference type="PRINTS" id="PR01504">
    <property type="entry name" value="PNCREATITSAP"/>
</dbReference>
<dbReference type="SMART" id="SM00034">
    <property type="entry name" value="CLECT"/>
    <property type="match status" value="1"/>
</dbReference>
<dbReference type="SUPFAM" id="SSF56436">
    <property type="entry name" value="C-type lectin-like"/>
    <property type="match status" value="1"/>
</dbReference>
<dbReference type="PROSITE" id="PS50041">
    <property type="entry name" value="C_TYPE_LECTIN_2"/>
    <property type="match status" value="1"/>
</dbReference>
<proteinExistence type="evidence at transcript level"/>
<feature type="signal peptide" evidence="1">
    <location>
        <begin position="1"/>
        <end position="22"/>
    </location>
</feature>
<feature type="chain" id="PRO_0000017438" description="Regenerating islet-derived protein 4">
    <location>
        <begin position="23"/>
        <end position="157"/>
    </location>
</feature>
<feature type="domain" description="C-type lectin" evidence="3">
    <location>
        <begin position="36"/>
        <end position="154"/>
    </location>
</feature>
<feature type="binding site" evidence="1">
    <location>
        <begin position="97"/>
        <end position="102"/>
    </location>
    <ligand>
        <name>a carbohydrate</name>
        <dbReference type="ChEBI" id="CHEBI:16646"/>
    </ligand>
</feature>
<feature type="binding site" evidence="1">
    <location>
        <begin position="134"/>
        <end position="136"/>
    </location>
    <ligand>
        <name>a carbohydrate</name>
        <dbReference type="ChEBI" id="CHEBI:16646"/>
    </ligand>
</feature>
<feature type="glycosylation site" description="N-linked (GlcNAc...) asparagine" evidence="2">
    <location>
        <position position="49"/>
    </location>
</feature>
<feature type="glycosylation site" description="N-linked (GlcNAc...) asparagine" evidence="2">
    <location>
        <position position="62"/>
    </location>
</feature>
<feature type="disulfide bond" evidence="3">
    <location>
        <begin position="29"/>
        <end position="40"/>
    </location>
</feature>
<feature type="disulfide bond" evidence="3">
    <location>
        <begin position="57"/>
        <end position="153"/>
    </location>
</feature>
<feature type="disulfide bond" evidence="3">
    <location>
        <begin position="128"/>
        <end position="145"/>
    </location>
</feature>
<feature type="sequence conflict" description="In Ref. 1; BAB25669." evidence="4" ref="1">
    <original>S</original>
    <variation>Y</variation>
    <location>
        <position position="3"/>
    </location>
</feature>
<accession>Q9D8G5</accession>
<accession>Q3TS25</accession>
<accession>Q9D858</accession>
<sequence length="157" mass="18398">MASKGVRLLLLLSWVAGPEVLSDILRPSCAPGWFYYRSHCYGYFRKLRNWSHAELECQSYGNGSHLASVLNQKEASVISKYITGYQRNLPVWIGLHDPQKKQLWQWTDGSTNLYRRWNPRTKSEARHCAEMNPKDKFLTWNKNGCANRQHFLCKYKT</sequence>
<comment type="function">
    <text evidence="1">Calcium-independent lectin displaying mannose-binding specificity and able to maintain carbohydrate recognition activity in an acidic environment. May be involved in inflammatory and metaplastic responses of the gastrointestinal epithelium (By similarity).</text>
</comment>
<comment type="subcellular location">
    <subcellularLocation>
        <location evidence="1">Secreted</location>
    </subcellularLocation>
</comment>
<evidence type="ECO:0000250" key="1"/>
<evidence type="ECO:0000255" key="2"/>
<evidence type="ECO:0000255" key="3">
    <source>
        <dbReference type="PROSITE-ProRule" id="PRU00040"/>
    </source>
</evidence>
<evidence type="ECO:0000305" key="4"/>
<keyword id="KW-1015">Disulfide bond</keyword>
<keyword id="KW-0325">Glycoprotein</keyword>
<keyword id="KW-0430">Lectin</keyword>
<keyword id="KW-1185">Reference proteome</keyword>
<keyword id="KW-0964">Secreted</keyword>
<keyword id="KW-0732">Signal</keyword>
<protein>
    <recommendedName>
        <fullName>Regenerating islet-derived protein 4</fullName>
        <shortName>REG-4</shortName>
    </recommendedName>
</protein>
<name>REG4_MOUSE</name>
<reference key="1">
    <citation type="journal article" date="2005" name="Science">
        <title>The transcriptional landscape of the mammalian genome.</title>
        <authorList>
            <person name="Carninci P."/>
            <person name="Kasukawa T."/>
            <person name="Katayama S."/>
            <person name="Gough J."/>
            <person name="Frith M.C."/>
            <person name="Maeda N."/>
            <person name="Oyama R."/>
            <person name="Ravasi T."/>
            <person name="Lenhard B."/>
            <person name="Wells C."/>
            <person name="Kodzius R."/>
            <person name="Shimokawa K."/>
            <person name="Bajic V.B."/>
            <person name="Brenner S.E."/>
            <person name="Batalov S."/>
            <person name="Forrest A.R."/>
            <person name="Zavolan M."/>
            <person name="Davis M.J."/>
            <person name="Wilming L.G."/>
            <person name="Aidinis V."/>
            <person name="Allen J.E."/>
            <person name="Ambesi-Impiombato A."/>
            <person name="Apweiler R."/>
            <person name="Aturaliya R.N."/>
            <person name="Bailey T.L."/>
            <person name="Bansal M."/>
            <person name="Baxter L."/>
            <person name="Beisel K.W."/>
            <person name="Bersano T."/>
            <person name="Bono H."/>
            <person name="Chalk A.M."/>
            <person name="Chiu K.P."/>
            <person name="Choudhary V."/>
            <person name="Christoffels A."/>
            <person name="Clutterbuck D.R."/>
            <person name="Crowe M.L."/>
            <person name="Dalla E."/>
            <person name="Dalrymple B.P."/>
            <person name="de Bono B."/>
            <person name="Della Gatta G."/>
            <person name="di Bernardo D."/>
            <person name="Down T."/>
            <person name="Engstrom P."/>
            <person name="Fagiolini M."/>
            <person name="Faulkner G."/>
            <person name="Fletcher C.F."/>
            <person name="Fukushima T."/>
            <person name="Furuno M."/>
            <person name="Futaki S."/>
            <person name="Gariboldi M."/>
            <person name="Georgii-Hemming P."/>
            <person name="Gingeras T.R."/>
            <person name="Gojobori T."/>
            <person name="Green R.E."/>
            <person name="Gustincich S."/>
            <person name="Harbers M."/>
            <person name="Hayashi Y."/>
            <person name="Hensch T.K."/>
            <person name="Hirokawa N."/>
            <person name="Hill D."/>
            <person name="Huminiecki L."/>
            <person name="Iacono M."/>
            <person name="Ikeo K."/>
            <person name="Iwama A."/>
            <person name="Ishikawa T."/>
            <person name="Jakt M."/>
            <person name="Kanapin A."/>
            <person name="Katoh M."/>
            <person name="Kawasawa Y."/>
            <person name="Kelso J."/>
            <person name="Kitamura H."/>
            <person name="Kitano H."/>
            <person name="Kollias G."/>
            <person name="Krishnan S.P."/>
            <person name="Kruger A."/>
            <person name="Kummerfeld S.K."/>
            <person name="Kurochkin I.V."/>
            <person name="Lareau L.F."/>
            <person name="Lazarevic D."/>
            <person name="Lipovich L."/>
            <person name="Liu J."/>
            <person name="Liuni S."/>
            <person name="McWilliam S."/>
            <person name="Madan Babu M."/>
            <person name="Madera M."/>
            <person name="Marchionni L."/>
            <person name="Matsuda H."/>
            <person name="Matsuzawa S."/>
            <person name="Miki H."/>
            <person name="Mignone F."/>
            <person name="Miyake S."/>
            <person name="Morris K."/>
            <person name="Mottagui-Tabar S."/>
            <person name="Mulder N."/>
            <person name="Nakano N."/>
            <person name="Nakauchi H."/>
            <person name="Ng P."/>
            <person name="Nilsson R."/>
            <person name="Nishiguchi S."/>
            <person name="Nishikawa S."/>
            <person name="Nori F."/>
            <person name="Ohara O."/>
            <person name="Okazaki Y."/>
            <person name="Orlando V."/>
            <person name="Pang K.C."/>
            <person name="Pavan W.J."/>
            <person name="Pavesi G."/>
            <person name="Pesole G."/>
            <person name="Petrovsky N."/>
            <person name="Piazza S."/>
            <person name="Reed J."/>
            <person name="Reid J.F."/>
            <person name="Ring B.Z."/>
            <person name="Ringwald M."/>
            <person name="Rost B."/>
            <person name="Ruan Y."/>
            <person name="Salzberg S.L."/>
            <person name="Sandelin A."/>
            <person name="Schneider C."/>
            <person name="Schoenbach C."/>
            <person name="Sekiguchi K."/>
            <person name="Semple C.A."/>
            <person name="Seno S."/>
            <person name="Sessa L."/>
            <person name="Sheng Y."/>
            <person name="Shibata Y."/>
            <person name="Shimada H."/>
            <person name="Shimada K."/>
            <person name="Silva D."/>
            <person name="Sinclair B."/>
            <person name="Sperling S."/>
            <person name="Stupka E."/>
            <person name="Sugiura K."/>
            <person name="Sultana R."/>
            <person name="Takenaka Y."/>
            <person name="Taki K."/>
            <person name="Tammoja K."/>
            <person name="Tan S.L."/>
            <person name="Tang S."/>
            <person name="Taylor M.S."/>
            <person name="Tegner J."/>
            <person name="Teichmann S.A."/>
            <person name="Ueda H.R."/>
            <person name="van Nimwegen E."/>
            <person name="Verardo R."/>
            <person name="Wei C.L."/>
            <person name="Yagi K."/>
            <person name="Yamanishi H."/>
            <person name="Zabarovsky E."/>
            <person name="Zhu S."/>
            <person name="Zimmer A."/>
            <person name="Hide W."/>
            <person name="Bult C."/>
            <person name="Grimmond S.M."/>
            <person name="Teasdale R.D."/>
            <person name="Liu E.T."/>
            <person name="Brusic V."/>
            <person name="Quackenbush J."/>
            <person name="Wahlestedt C."/>
            <person name="Mattick J.S."/>
            <person name="Hume D.A."/>
            <person name="Kai C."/>
            <person name="Sasaki D."/>
            <person name="Tomaru Y."/>
            <person name="Fukuda S."/>
            <person name="Kanamori-Katayama M."/>
            <person name="Suzuki M."/>
            <person name="Aoki J."/>
            <person name="Arakawa T."/>
            <person name="Iida J."/>
            <person name="Imamura K."/>
            <person name="Itoh M."/>
            <person name="Kato T."/>
            <person name="Kawaji H."/>
            <person name="Kawagashira N."/>
            <person name="Kawashima T."/>
            <person name="Kojima M."/>
            <person name="Kondo S."/>
            <person name="Konno H."/>
            <person name="Nakano K."/>
            <person name="Ninomiya N."/>
            <person name="Nishio T."/>
            <person name="Okada M."/>
            <person name="Plessy C."/>
            <person name="Shibata K."/>
            <person name="Shiraki T."/>
            <person name="Suzuki S."/>
            <person name="Tagami M."/>
            <person name="Waki K."/>
            <person name="Watahiki A."/>
            <person name="Okamura-Oho Y."/>
            <person name="Suzuki H."/>
            <person name="Kawai J."/>
            <person name="Hayashizaki Y."/>
        </authorList>
    </citation>
    <scope>NUCLEOTIDE SEQUENCE [LARGE SCALE MRNA]</scope>
    <source>
        <strain>C57BL/6J</strain>
        <tissue>Colon</tissue>
        <tissue>Small intestine</tissue>
    </source>
</reference>
<reference key="2">
    <citation type="journal article" date="2004" name="Genome Res.">
        <title>The status, quality, and expansion of the NIH full-length cDNA project: the Mammalian Gene Collection (MGC).</title>
        <authorList>
            <consortium name="The MGC Project Team"/>
        </authorList>
    </citation>
    <scope>NUCLEOTIDE SEQUENCE [LARGE SCALE MRNA]</scope>
    <source>
        <strain>FVB/N</strain>
        <tissue>Colon</tissue>
    </source>
</reference>
<organism>
    <name type="scientific">Mus musculus</name>
    <name type="common">Mouse</name>
    <dbReference type="NCBI Taxonomy" id="10090"/>
    <lineage>
        <taxon>Eukaryota</taxon>
        <taxon>Metazoa</taxon>
        <taxon>Chordata</taxon>
        <taxon>Craniata</taxon>
        <taxon>Vertebrata</taxon>
        <taxon>Euteleostomi</taxon>
        <taxon>Mammalia</taxon>
        <taxon>Eutheria</taxon>
        <taxon>Euarchontoglires</taxon>
        <taxon>Glires</taxon>
        <taxon>Rodentia</taxon>
        <taxon>Myomorpha</taxon>
        <taxon>Muroidea</taxon>
        <taxon>Muridae</taxon>
        <taxon>Murinae</taxon>
        <taxon>Mus</taxon>
        <taxon>Mus</taxon>
    </lineage>
</organism>
<gene>
    <name type="primary">Reg4</name>
</gene>